<evidence type="ECO:0000269" key="1">
    <source>
    </source>
</evidence>
<evidence type="ECO:0000269" key="2">
    <source>
    </source>
</evidence>
<evidence type="ECO:0000269" key="3">
    <source>
    </source>
</evidence>
<evidence type="ECO:0000305" key="4"/>
<evidence type="ECO:0000312" key="5">
    <source>
        <dbReference type="EMBL" id="AAF52599.2"/>
    </source>
</evidence>
<comment type="function">
    <text evidence="1 2 3">Component of the Mediator complex, a coactivator involved in the regulated transcription of nearly all RNA polymerase II-dependent genes. Mediator functions as a bridge to convey information from gene-specific regulatory proteins to the basal RNA polymerase II transcription machinery. Mediator is recruited to promoters by direct interactions with regulatory proteins and serves as a scaffold for the assembly of a functional preinitiation complex with RNA polymerase II and the general transcription factors. Required for activated transcription of the MtnA gene.</text>
</comment>
<comment type="subunit">
    <text evidence="1 2">Component of the Mediator complex, which includes at least CDK8, MED4, MED6, MED11, MED14, MED17, MED18, MED20, MED21, MED22, MED27, MED28, MED30 and MED31.</text>
</comment>
<comment type="interaction">
    <interactant intactId="EBI-175591">
        <id>P91641</id>
    </interactant>
    <interactant intactId="EBI-135284">
        <id>Q9VEC1</id>
        <label>MED17</label>
    </interactant>
    <organismsDiffer>false</organismsDiffer>
    <experiments>7</experiments>
</comment>
<comment type="interaction">
    <interactant intactId="EBI-175591">
        <id>P91641</id>
    </interactant>
    <interactant intactId="EBI-148856">
        <id>Q9XZT1</id>
        <label>MED18</label>
    </interactant>
    <organismsDiffer>false</organismsDiffer>
    <experiments>5</experiments>
</comment>
<comment type="interaction">
    <interactant intactId="EBI-175591">
        <id>P91641</id>
    </interactant>
    <interactant intactId="EBI-194467">
        <id>Q8MSX2</id>
        <label>MED6</label>
    </interactant>
    <organismsDiffer>false</organismsDiffer>
    <experiments>2</experiments>
</comment>
<comment type="subcellular location">
    <subcellularLocation>
        <location evidence="4">Nucleus</location>
    </subcellularLocation>
</comment>
<comment type="developmental stage">
    <text evidence="1">Maternally encoded. Expression decreases during larval stages then rises during mid-pupal metamorphosis.</text>
</comment>
<comment type="similarity">
    <text evidence="4">Belongs to the Mediator complex subunit 20 family.</text>
</comment>
<dbReference type="EMBL" id="Y10975">
    <property type="protein sequence ID" value="CAA71871.1"/>
    <property type="molecule type" value="mRNA"/>
</dbReference>
<dbReference type="EMBL" id="AE014134">
    <property type="protein sequence ID" value="AAF52599.2"/>
    <property type="molecule type" value="Genomic_DNA"/>
</dbReference>
<dbReference type="EMBL" id="BT003473">
    <property type="protein sequence ID" value="AAO39476.1"/>
    <property type="molecule type" value="mRNA"/>
</dbReference>
<dbReference type="RefSeq" id="NP_524663.2">
    <property type="nucleotide sequence ID" value="NM_079924.3"/>
</dbReference>
<dbReference type="SMR" id="P91641"/>
<dbReference type="BioGRID" id="68741">
    <property type="interactions" value="34"/>
</dbReference>
<dbReference type="ComplexPortal" id="CPX-2308">
    <property type="entry name" value="Core mediator complex"/>
</dbReference>
<dbReference type="DIP" id="DIP-21881N"/>
<dbReference type="FunCoup" id="P91641">
    <property type="interactions" value="2453"/>
</dbReference>
<dbReference type="IntAct" id="P91641">
    <property type="interactions" value="45"/>
</dbReference>
<dbReference type="STRING" id="7227.FBpp0302978"/>
<dbReference type="PaxDb" id="7227-FBpp0079166"/>
<dbReference type="DNASU" id="43952"/>
<dbReference type="EnsemblMetazoa" id="FBtr0079544">
    <property type="protein sequence ID" value="FBpp0079166"/>
    <property type="gene ID" value="FBgn0013531"/>
</dbReference>
<dbReference type="GeneID" id="43952"/>
<dbReference type="KEGG" id="dme:Dmel_CG18780"/>
<dbReference type="AGR" id="FB:FBgn0013531"/>
<dbReference type="CTD" id="9477"/>
<dbReference type="FlyBase" id="FBgn0013531">
    <property type="gene designation" value="MED20"/>
</dbReference>
<dbReference type="VEuPathDB" id="VectorBase:FBgn0013531"/>
<dbReference type="eggNOG" id="KOG4309">
    <property type="taxonomic scope" value="Eukaryota"/>
</dbReference>
<dbReference type="GeneTree" id="ENSGT00390000002060"/>
<dbReference type="HOGENOM" id="CLU_080044_1_0_1"/>
<dbReference type="InParanoid" id="P91641"/>
<dbReference type="OMA" id="NDIYEPM"/>
<dbReference type="OrthoDB" id="1854899at2759"/>
<dbReference type="PhylomeDB" id="P91641"/>
<dbReference type="Reactome" id="R-DME-9841922">
    <property type="pathway name" value="MLL4 and MLL3 complexes regulate expression of PPARG target genes in adipogenesis and hepatic steatosis"/>
</dbReference>
<dbReference type="BioGRID-ORCS" id="43952">
    <property type="hits" value="0 hits in 1 CRISPR screen"/>
</dbReference>
<dbReference type="GenomeRNAi" id="43952"/>
<dbReference type="PRO" id="PR:P91641"/>
<dbReference type="Proteomes" id="UP000000803">
    <property type="component" value="Chromosome 2L"/>
</dbReference>
<dbReference type="Bgee" id="FBgn0013531">
    <property type="expression patterns" value="Expressed in adult middle midgut class II enteroendocrine cell in adult midgut (Drosophila) and 47 other cell types or tissues"/>
</dbReference>
<dbReference type="ExpressionAtlas" id="P91641">
    <property type="expression patterns" value="baseline and differential"/>
</dbReference>
<dbReference type="GO" id="GO:0016592">
    <property type="term" value="C:mediator complex"/>
    <property type="evidence" value="ECO:0000314"/>
    <property type="project" value="FlyBase"/>
</dbReference>
<dbReference type="GO" id="GO:0005634">
    <property type="term" value="C:nucleus"/>
    <property type="evidence" value="ECO:0000314"/>
    <property type="project" value="FlyBase"/>
</dbReference>
<dbReference type="GO" id="GO:0003712">
    <property type="term" value="F:transcription coregulator activity"/>
    <property type="evidence" value="ECO:0007669"/>
    <property type="project" value="InterPro"/>
</dbReference>
<dbReference type="GO" id="GO:0045893">
    <property type="term" value="P:positive regulation of DNA-templated transcription"/>
    <property type="evidence" value="ECO:0007669"/>
    <property type="project" value="GOC"/>
</dbReference>
<dbReference type="GO" id="GO:0006357">
    <property type="term" value="P:regulation of transcription by RNA polymerase II"/>
    <property type="evidence" value="ECO:0000314"/>
    <property type="project" value="FlyBase"/>
</dbReference>
<dbReference type="InterPro" id="IPR013921">
    <property type="entry name" value="Mediator_Med20"/>
</dbReference>
<dbReference type="PANTHER" id="PTHR12465:SF0">
    <property type="entry name" value="MEDIATOR OF RNA POLYMERASE II TRANSCRIPTION SUBUNIT 20"/>
    <property type="match status" value="1"/>
</dbReference>
<dbReference type="PANTHER" id="PTHR12465">
    <property type="entry name" value="UBIQUITIN SPECIFIC PROTEASE HOMOLOG 49"/>
    <property type="match status" value="1"/>
</dbReference>
<dbReference type="Pfam" id="PF08612">
    <property type="entry name" value="Med20"/>
    <property type="match status" value="1"/>
</dbReference>
<feature type="chain" id="PRO_0000096373" description="Mediator of RNA polymerase II transcription subunit 20">
    <location>
        <begin position="1"/>
        <end position="252"/>
    </location>
</feature>
<feature type="sequence conflict" description="In Ref. 1; CAA71871." evidence="4" ref="1">
    <original>H</original>
    <variation>Q</variation>
    <location>
        <position position="220"/>
    </location>
</feature>
<accession>P91641</accession>
<accession>Q9VLT4</accession>
<gene>
    <name type="primary">MED20</name>
    <name type="synonym">Tmr</name>
    <name type="synonym">Trfp</name>
    <name type="ORF">CG18780</name>
</gene>
<reference evidence="4" key="1">
    <citation type="submission" date="1997-02" db="EMBL/GenBank/DDBJ databases">
        <title>Mutations near the Trf cluster cause a premeiotic defect in the Drosophila male germ line.</title>
        <authorList>
            <person name="Crowley T.E."/>
        </authorList>
    </citation>
    <scope>NUCLEOTIDE SEQUENCE [MRNA]</scope>
    <source>
        <tissue>Testis</tissue>
    </source>
</reference>
<reference evidence="4" key="2">
    <citation type="journal article" date="2000" name="Science">
        <title>The genome sequence of Drosophila melanogaster.</title>
        <authorList>
            <person name="Adams M.D."/>
            <person name="Celniker S.E."/>
            <person name="Holt R.A."/>
            <person name="Evans C.A."/>
            <person name="Gocayne J.D."/>
            <person name="Amanatides P.G."/>
            <person name="Scherer S.E."/>
            <person name="Li P.W."/>
            <person name="Hoskins R.A."/>
            <person name="Galle R.F."/>
            <person name="George R.A."/>
            <person name="Lewis S.E."/>
            <person name="Richards S."/>
            <person name="Ashburner M."/>
            <person name="Henderson S.N."/>
            <person name="Sutton G.G."/>
            <person name="Wortman J.R."/>
            <person name="Yandell M.D."/>
            <person name="Zhang Q."/>
            <person name="Chen L.X."/>
            <person name="Brandon R.C."/>
            <person name="Rogers Y.-H.C."/>
            <person name="Blazej R.G."/>
            <person name="Champe M."/>
            <person name="Pfeiffer B.D."/>
            <person name="Wan K.H."/>
            <person name="Doyle C."/>
            <person name="Baxter E.G."/>
            <person name="Helt G."/>
            <person name="Nelson C.R."/>
            <person name="Miklos G.L.G."/>
            <person name="Abril J.F."/>
            <person name="Agbayani A."/>
            <person name="An H.-J."/>
            <person name="Andrews-Pfannkoch C."/>
            <person name="Baldwin D."/>
            <person name="Ballew R.M."/>
            <person name="Basu A."/>
            <person name="Baxendale J."/>
            <person name="Bayraktaroglu L."/>
            <person name="Beasley E.M."/>
            <person name="Beeson K.Y."/>
            <person name="Benos P.V."/>
            <person name="Berman B.P."/>
            <person name="Bhandari D."/>
            <person name="Bolshakov S."/>
            <person name="Borkova D."/>
            <person name="Botchan M.R."/>
            <person name="Bouck J."/>
            <person name="Brokstein P."/>
            <person name="Brottier P."/>
            <person name="Burtis K.C."/>
            <person name="Busam D.A."/>
            <person name="Butler H."/>
            <person name="Cadieu E."/>
            <person name="Center A."/>
            <person name="Chandra I."/>
            <person name="Cherry J.M."/>
            <person name="Cawley S."/>
            <person name="Dahlke C."/>
            <person name="Davenport L.B."/>
            <person name="Davies P."/>
            <person name="de Pablos B."/>
            <person name="Delcher A."/>
            <person name="Deng Z."/>
            <person name="Mays A.D."/>
            <person name="Dew I."/>
            <person name="Dietz S.M."/>
            <person name="Dodson K."/>
            <person name="Doup L.E."/>
            <person name="Downes M."/>
            <person name="Dugan-Rocha S."/>
            <person name="Dunkov B.C."/>
            <person name="Dunn P."/>
            <person name="Durbin K.J."/>
            <person name="Evangelista C.C."/>
            <person name="Ferraz C."/>
            <person name="Ferriera S."/>
            <person name="Fleischmann W."/>
            <person name="Fosler C."/>
            <person name="Gabrielian A.E."/>
            <person name="Garg N.S."/>
            <person name="Gelbart W.M."/>
            <person name="Glasser K."/>
            <person name="Glodek A."/>
            <person name="Gong F."/>
            <person name="Gorrell J.H."/>
            <person name="Gu Z."/>
            <person name="Guan P."/>
            <person name="Harris M."/>
            <person name="Harris N.L."/>
            <person name="Harvey D.A."/>
            <person name="Heiman T.J."/>
            <person name="Hernandez J.R."/>
            <person name="Houck J."/>
            <person name="Hostin D."/>
            <person name="Houston K.A."/>
            <person name="Howland T.J."/>
            <person name="Wei M.-H."/>
            <person name="Ibegwam C."/>
            <person name="Jalali M."/>
            <person name="Kalush F."/>
            <person name="Karpen G.H."/>
            <person name="Ke Z."/>
            <person name="Kennison J.A."/>
            <person name="Ketchum K.A."/>
            <person name="Kimmel B.E."/>
            <person name="Kodira C.D."/>
            <person name="Kraft C.L."/>
            <person name="Kravitz S."/>
            <person name="Kulp D."/>
            <person name="Lai Z."/>
            <person name="Lasko P."/>
            <person name="Lei Y."/>
            <person name="Levitsky A.A."/>
            <person name="Li J.H."/>
            <person name="Li Z."/>
            <person name="Liang Y."/>
            <person name="Lin X."/>
            <person name="Liu X."/>
            <person name="Mattei B."/>
            <person name="McIntosh T.C."/>
            <person name="McLeod M.P."/>
            <person name="McPherson D."/>
            <person name="Merkulov G."/>
            <person name="Milshina N.V."/>
            <person name="Mobarry C."/>
            <person name="Morris J."/>
            <person name="Moshrefi A."/>
            <person name="Mount S.M."/>
            <person name="Moy M."/>
            <person name="Murphy B."/>
            <person name="Murphy L."/>
            <person name="Muzny D.M."/>
            <person name="Nelson D.L."/>
            <person name="Nelson D.R."/>
            <person name="Nelson K.A."/>
            <person name="Nixon K."/>
            <person name="Nusskern D.R."/>
            <person name="Pacleb J.M."/>
            <person name="Palazzolo M."/>
            <person name="Pittman G.S."/>
            <person name="Pan S."/>
            <person name="Pollard J."/>
            <person name="Puri V."/>
            <person name="Reese M.G."/>
            <person name="Reinert K."/>
            <person name="Remington K."/>
            <person name="Saunders R.D.C."/>
            <person name="Scheeler F."/>
            <person name="Shen H."/>
            <person name="Shue B.C."/>
            <person name="Siden-Kiamos I."/>
            <person name="Simpson M."/>
            <person name="Skupski M.P."/>
            <person name="Smith T.J."/>
            <person name="Spier E."/>
            <person name="Spradling A.C."/>
            <person name="Stapleton M."/>
            <person name="Strong R."/>
            <person name="Sun E."/>
            <person name="Svirskas R."/>
            <person name="Tector C."/>
            <person name="Turner R."/>
            <person name="Venter E."/>
            <person name="Wang A.H."/>
            <person name="Wang X."/>
            <person name="Wang Z.-Y."/>
            <person name="Wassarman D.A."/>
            <person name="Weinstock G.M."/>
            <person name="Weissenbach J."/>
            <person name="Williams S.M."/>
            <person name="Woodage T."/>
            <person name="Worley K.C."/>
            <person name="Wu D."/>
            <person name="Yang S."/>
            <person name="Yao Q.A."/>
            <person name="Ye J."/>
            <person name="Yeh R.-F."/>
            <person name="Zaveri J.S."/>
            <person name="Zhan M."/>
            <person name="Zhang G."/>
            <person name="Zhao Q."/>
            <person name="Zheng L."/>
            <person name="Zheng X.H."/>
            <person name="Zhong F.N."/>
            <person name="Zhong W."/>
            <person name="Zhou X."/>
            <person name="Zhu S.C."/>
            <person name="Zhu X."/>
            <person name="Smith H.O."/>
            <person name="Gibbs R.A."/>
            <person name="Myers E.W."/>
            <person name="Rubin G.M."/>
            <person name="Venter J.C."/>
        </authorList>
    </citation>
    <scope>NUCLEOTIDE SEQUENCE [LARGE SCALE GENOMIC DNA]</scope>
    <source>
        <strain>Berkeley</strain>
    </source>
</reference>
<reference evidence="4" key="3">
    <citation type="journal article" date="2002" name="Genome Biol.">
        <title>Annotation of the Drosophila melanogaster euchromatic genome: a systematic review.</title>
        <authorList>
            <person name="Misra S."/>
            <person name="Crosby M.A."/>
            <person name="Mungall C.J."/>
            <person name="Matthews B.B."/>
            <person name="Campbell K.S."/>
            <person name="Hradecky P."/>
            <person name="Huang Y."/>
            <person name="Kaminker J.S."/>
            <person name="Millburn G.H."/>
            <person name="Prochnik S.E."/>
            <person name="Smith C.D."/>
            <person name="Tupy J.L."/>
            <person name="Whitfield E.J."/>
            <person name="Bayraktaroglu L."/>
            <person name="Berman B.P."/>
            <person name="Bettencourt B.R."/>
            <person name="Celniker S.E."/>
            <person name="de Grey A.D.N.J."/>
            <person name="Drysdale R.A."/>
            <person name="Harris N.L."/>
            <person name="Richter J."/>
            <person name="Russo S."/>
            <person name="Schroeder A.J."/>
            <person name="Shu S.Q."/>
            <person name="Stapleton M."/>
            <person name="Yamada C."/>
            <person name="Ashburner M."/>
            <person name="Gelbart W.M."/>
            <person name="Rubin G.M."/>
            <person name="Lewis S.E."/>
        </authorList>
    </citation>
    <scope>GENOME REANNOTATION</scope>
    <source>
        <strain>Berkeley</strain>
    </source>
</reference>
<reference evidence="4" key="4">
    <citation type="submission" date="2003-02" db="EMBL/GenBank/DDBJ databases">
        <authorList>
            <person name="Stapleton M."/>
            <person name="Brokstein P."/>
            <person name="Hong L."/>
            <person name="Agbayani A."/>
            <person name="Carlson J.W."/>
            <person name="Champe M."/>
            <person name="Chavez C."/>
            <person name="Dorsett V."/>
            <person name="Dresnek D."/>
            <person name="Farfan D."/>
            <person name="Frise E."/>
            <person name="George R.A."/>
            <person name="Gonzalez M."/>
            <person name="Guarin H."/>
            <person name="Kronmiller B."/>
            <person name="Li P.W."/>
            <person name="Liao G."/>
            <person name="Miranda A."/>
            <person name="Mungall C.J."/>
            <person name="Nunoo J."/>
            <person name="Pacleb J.M."/>
            <person name="Paragas V."/>
            <person name="Park S."/>
            <person name="Patel S."/>
            <person name="Phouanenavong S."/>
            <person name="Wan K.H."/>
            <person name="Yu C."/>
            <person name="Lewis S.E."/>
            <person name="Rubin G.M."/>
            <person name="Celniker S.E."/>
        </authorList>
    </citation>
    <scope>NUCLEOTIDE SEQUENCE [LARGE SCALE MRNA]</scope>
    <source>
        <strain>Berkeley</strain>
        <tissue>Embryo</tissue>
    </source>
</reference>
<reference key="5">
    <citation type="journal article" date="2001" name="Mol. Cell. Biol.">
        <title>Drosophila Mediator complex is broadly utilized by diverse gene-specific transcription factors at different types of core promoters.</title>
        <authorList>
            <person name="Park J.M."/>
            <person name="Gim B.S."/>
            <person name="Kim J.M."/>
            <person name="Yoon J.H."/>
            <person name="Kim H.-S."/>
            <person name="Kang J.-G."/>
            <person name="Kim Y.-J."/>
        </authorList>
    </citation>
    <scope>IDENTIFICATION BY MASS SPECTROMETRY</scope>
    <scope>FUNCTION OF THE MEDIATOR COMPLEX</scope>
    <scope>IDENTIFICATION IN A COMPLEX WITH CDK8; MED4; MED6; MED14; MED17; MED18; MED21 AND MED31</scope>
    <scope>DEVELOPMENTAL STAGE</scope>
</reference>
<reference key="6">
    <citation type="journal article" date="2002" name="J. Biol. Chem.">
        <title>Novel Mediator proteins of the small Mediator complex in Drosophila SL2 cells.</title>
        <authorList>
            <person name="Gu J.-Y."/>
            <person name="Park J.M."/>
            <person name="Song E.J."/>
            <person name="Mizuguchi G."/>
            <person name="Yoon J.H."/>
            <person name="Kim-Ha J."/>
            <person name="Lee K.-J."/>
            <person name="Kim Y.-J."/>
        </authorList>
    </citation>
    <scope>IDENTIFICATION BY MASS SPECTROMETRY</scope>
    <scope>IDENTIFICATION IN THE MEDIATOR COMPLEX</scope>
    <scope>FUNCTION OF THE MEDIATOR COMPLEX</scope>
</reference>
<reference key="7">
    <citation type="journal article" date="2006" name="Genes Dev.">
        <title>Coactivator cross-talk specifies transcriptional output.</title>
        <authorList>
            <person name="Marr M.T. II"/>
            <person name="Isogai Y."/>
            <person name="Wright K.J."/>
            <person name="Tjian R."/>
        </authorList>
    </citation>
    <scope>FUNCTION</scope>
</reference>
<keyword id="KW-0010">Activator</keyword>
<keyword id="KW-0539">Nucleus</keyword>
<keyword id="KW-1185">Reference proteome</keyword>
<keyword id="KW-0804">Transcription</keyword>
<keyword id="KW-0805">Transcription regulation</keyword>
<sequence>MGVTILQPYPLPEGKSGAHIIDQLSKRLLALGATHAGQFLVDCETFISTPQPHNGAPGRAVHVLHNSEYPASTFSIIDNGTGKQVAIVADNIFDLLMLKMTNTFTSKKQTKIESRGARFEYGDFVIKLGSVTMMEHFKGILIEIEYKSCVILAYCWEMIREMLQGFLGIAVNKDFPSYFAPQTIMTAMGQQQLHAKHNDIFEPMDTVKQYLEQFTNYRKHVTLMGGMGSGPGSQQVGPNVHMSPAVAGLHRS</sequence>
<name>MED20_DROME</name>
<protein>
    <recommendedName>
        <fullName>Mediator of RNA polymerase II transcription subunit 20</fullName>
    </recommendedName>
    <alternativeName>
        <fullName>Mediator complex subunit 20</fullName>
    </alternativeName>
    <alternativeName>
        <fullName>Protein trf-proximal</fullName>
    </alternativeName>
    <alternativeName>
        <fullName>dMED20</fullName>
    </alternativeName>
    <alternativeName>
        <fullName>dTrap26</fullName>
    </alternativeName>
    <alternativeName>
        <fullName>dTrfp</fullName>
    </alternativeName>
</protein>
<proteinExistence type="evidence at protein level"/>
<organism evidence="5">
    <name type="scientific">Drosophila melanogaster</name>
    <name type="common">Fruit fly</name>
    <dbReference type="NCBI Taxonomy" id="7227"/>
    <lineage>
        <taxon>Eukaryota</taxon>
        <taxon>Metazoa</taxon>
        <taxon>Ecdysozoa</taxon>
        <taxon>Arthropoda</taxon>
        <taxon>Hexapoda</taxon>
        <taxon>Insecta</taxon>
        <taxon>Pterygota</taxon>
        <taxon>Neoptera</taxon>
        <taxon>Endopterygota</taxon>
        <taxon>Diptera</taxon>
        <taxon>Brachycera</taxon>
        <taxon>Muscomorpha</taxon>
        <taxon>Ephydroidea</taxon>
        <taxon>Drosophilidae</taxon>
        <taxon>Drosophila</taxon>
        <taxon>Sophophora</taxon>
    </lineage>
</organism>